<evidence type="ECO:0000250" key="1">
    <source>
        <dbReference type="UniProtKB" id="P05197"/>
    </source>
</evidence>
<evidence type="ECO:0000250" key="2">
    <source>
        <dbReference type="UniProtKB" id="P13639"/>
    </source>
</evidence>
<evidence type="ECO:0000250" key="3">
    <source>
        <dbReference type="UniProtKB" id="P32324"/>
    </source>
</evidence>
<evidence type="ECO:0000250" key="4">
    <source>
        <dbReference type="UniProtKB" id="P58252"/>
    </source>
</evidence>
<evidence type="ECO:0000250" key="5">
    <source>
        <dbReference type="UniProtKB" id="Q7ZXP8"/>
    </source>
</evidence>
<evidence type="ECO:0000255" key="6">
    <source>
        <dbReference type="PROSITE-ProRule" id="PRU01059"/>
    </source>
</evidence>
<protein>
    <recommendedName>
        <fullName>Elongation factor 2</fullName>
        <shortName>EF-2</shortName>
        <ecNumber evidence="2">3.6.5.-</ecNumber>
    </recommendedName>
</protein>
<gene>
    <name type="primary">EEF2</name>
</gene>
<comment type="function">
    <text evidence="2">Catalyzes the GTP-dependent ribosomal translocation step during translation elongation. During this step, the ribosome changes from the pre-translocational (PRE) to the post-translocational (POST) state as the newly formed A-site-bound peptidyl-tRNA and P-site-bound deacylated tRNA move to the P and E sites, respectively. Catalyzes the coordinated movement of the two tRNA molecules, the mRNA and conformational changes in the ribosome.</text>
</comment>
<comment type="catalytic activity">
    <reaction evidence="2">
        <text>GTP + H2O = GDP + phosphate + H(+)</text>
        <dbReference type="Rhea" id="RHEA:19669"/>
        <dbReference type="ChEBI" id="CHEBI:15377"/>
        <dbReference type="ChEBI" id="CHEBI:15378"/>
        <dbReference type="ChEBI" id="CHEBI:37565"/>
        <dbReference type="ChEBI" id="CHEBI:43474"/>
        <dbReference type="ChEBI" id="CHEBI:58189"/>
    </reaction>
    <physiologicalReaction direction="left-to-right" evidence="2">
        <dbReference type="Rhea" id="RHEA:19670"/>
    </physiologicalReaction>
</comment>
<comment type="subunit">
    <text evidence="2 5">Binds to 80S ribosomes. Actively translating ribosomes show mutually exclusive binding of eIF5a (EIF5A or EIF5A2) and EEF2/eEF2. Interacts with SERBP1; interaction sequesters EEF2/eEF2 at the A-site of the ribosome, thereby blocking the interaction sites of the mRNA-tRNA complex, promoting ribosome stabilization and hibernation (By similarity). Interacts with HABP4; interaction takes place at the A-site of hibernating ribosomes and promotes ribosome stabilization (By similarity). Component of the mRNA surveillance SURF complex, at least composed of ERF1, ERF3 (ERF3A or ERF3B), EEF2, UPF1/RENT1, SMG1, SMG8 and SMG9. Interacts with RBPMS2 (By similarity).</text>
</comment>
<comment type="subcellular location">
    <subcellularLocation>
        <location evidence="2">Cytoplasm</location>
    </subcellularLocation>
    <subcellularLocation>
        <location evidence="2">Nucleus</location>
    </subcellularLocation>
    <text evidence="2">Phosphorylation by CSK promotes cleavage and SUMOylation-dependent nuclear translocation of the C-terminal cleavage product.</text>
</comment>
<comment type="PTM">
    <text evidence="2">Phosphorylation by EF-2 kinase completely inactivates EF-2; it requires prior phosphorylation by CDK2 at Ser-595 during mitotic prometaphase. Phosphorylation by CSK promotes SUMOylation, proteolytic cleavage, and nuclear translocation if the C-terminal fragment.</text>
</comment>
<comment type="PTM">
    <text evidence="1">Diphthamide is 2-[3-carboxyamido-3-(trimethyl-ammonio)propyl]histidine (By similarity).</text>
</comment>
<comment type="PTM">
    <text evidence="2">ISGylated.</text>
</comment>
<comment type="PTM">
    <text evidence="2">Proteolytically processed at two sites following phosphorylation by CSK.</text>
</comment>
<comment type="PTM">
    <text evidence="2">SUMOylated following phosphorylation by CSK, promotes proteolytic cleavage.</text>
</comment>
<comment type="similarity">
    <text evidence="6">Belongs to the TRAFAC class translation factor GTPase superfamily. Classic translation factor GTPase family. EF-G/EF-2 subfamily.</text>
</comment>
<dbReference type="EC" id="3.6.5.-" evidence="2"/>
<dbReference type="EMBL" id="EF059744">
    <property type="protein sequence ID" value="ABK58358.1"/>
    <property type="molecule type" value="mRNA"/>
</dbReference>
<dbReference type="RefSeq" id="NP_001171973.1">
    <property type="nucleotide sequence ID" value="NM_001185044.1"/>
</dbReference>
<dbReference type="SMR" id="A0SXL6"/>
<dbReference type="FunCoup" id="A0SXL6">
    <property type="interactions" value="2216"/>
</dbReference>
<dbReference type="STRING" id="9483.ENSCJAP00000045718"/>
<dbReference type="Ensembl" id="ENSCJAT00000060116.4">
    <property type="protein sequence ID" value="ENSCJAP00000047498.3"/>
    <property type="gene ID" value="ENSCJAG00000015045.5"/>
</dbReference>
<dbReference type="GeneID" id="100392531"/>
<dbReference type="KEGG" id="cjc:100392531"/>
<dbReference type="CTD" id="1938"/>
<dbReference type="eggNOG" id="KOG0469">
    <property type="taxonomic scope" value="Eukaryota"/>
</dbReference>
<dbReference type="GeneTree" id="ENSGT00940000154662"/>
<dbReference type="InParanoid" id="A0SXL6"/>
<dbReference type="OrthoDB" id="364892at2759"/>
<dbReference type="TreeFam" id="TF300575"/>
<dbReference type="Proteomes" id="UP000008225">
    <property type="component" value="Chromosome 22"/>
</dbReference>
<dbReference type="Bgee" id="ENSCJAG00000015045">
    <property type="expression patterns" value="Expressed in ovary and 6 other cell types or tissues"/>
</dbReference>
<dbReference type="GO" id="GO:0005737">
    <property type="term" value="C:cytoplasm"/>
    <property type="evidence" value="ECO:0000250"/>
    <property type="project" value="UniProtKB"/>
</dbReference>
<dbReference type="GO" id="GO:0005829">
    <property type="term" value="C:cytosol"/>
    <property type="evidence" value="ECO:0007669"/>
    <property type="project" value="TreeGrafter"/>
</dbReference>
<dbReference type="GO" id="GO:0005634">
    <property type="term" value="C:nucleus"/>
    <property type="evidence" value="ECO:0007669"/>
    <property type="project" value="UniProtKB-SubCell"/>
</dbReference>
<dbReference type="GO" id="GO:1990904">
    <property type="term" value="C:ribonucleoprotein complex"/>
    <property type="evidence" value="ECO:0007669"/>
    <property type="project" value="TreeGrafter"/>
</dbReference>
<dbReference type="GO" id="GO:0005525">
    <property type="term" value="F:GTP binding"/>
    <property type="evidence" value="ECO:0007669"/>
    <property type="project" value="UniProtKB-KW"/>
</dbReference>
<dbReference type="GO" id="GO:0003924">
    <property type="term" value="F:GTPase activity"/>
    <property type="evidence" value="ECO:0000250"/>
    <property type="project" value="UniProtKB"/>
</dbReference>
<dbReference type="GO" id="GO:0043022">
    <property type="term" value="F:ribosome binding"/>
    <property type="evidence" value="ECO:0007669"/>
    <property type="project" value="TreeGrafter"/>
</dbReference>
<dbReference type="GO" id="GO:0003746">
    <property type="term" value="F:translation elongation factor activity"/>
    <property type="evidence" value="ECO:0000250"/>
    <property type="project" value="UniProtKB"/>
</dbReference>
<dbReference type="GO" id="GO:0006414">
    <property type="term" value="P:translational elongation"/>
    <property type="evidence" value="ECO:0000250"/>
    <property type="project" value="UniProtKB"/>
</dbReference>
<dbReference type="CDD" id="cd01681">
    <property type="entry name" value="aeEF2_snRNP_like_IV"/>
    <property type="match status" value="1"/>
</dbReference>
<dbReference type="CDD" id="cd04096">
    <property type="entry name" value="eEF2_snRNP_like_C"/>
    <property type="match status" value="1"/>
</dbReference>
<dbReference type="CDD" id="cd01885">
    <property type="entry name" value="EF2"/>
    <property type="match status" value="1"/>
</dbReference>
<dbReference type="CDD" id="cd16261">
    <property type="entry name" value="EF2_snRNP_III"/>
    <property type="match status" value="1"/>
</dbReference>
<dbReference type="CDD" id="cd03700">
    <property type="entry name" value="EF2_snRNP_like_II"/>
    <property type="match status" value="1"/>
</dbReference>
<dbReference type="FunFam" id="2.40.30.10:FF:000010">
    <property type="entry name" value="Translation elongation factor 2"/>
    <property type="match status" value="1"/>
</dbReference>
<dbReference type="FunFam" id="3.30.230.10:FF:000006">
    <property type="entry name" value="Translation elongation factor 2"/>
    <property type="match status" value="1"/>
</dbReference>
<dbReference type="FunFam" id="3.30.70.240:FF:000003">
    <property type="entry name" value="Translation elongation factor 2"/>
    <property type="match status" value="1"/>
</dbReference>
<dbReference type="FunFam" id="3.30.70.870:FF:000002">
    <property type="entry name" value="Translation elongation factor 2"/>
    <property type="match status" value="1"/>
</dbReference>
<dbReference type="FunFam" id="3.40.50.300:FF:000058">
    <property type="entry name" value="Translation elongation factor 2"/>
    <property type="match status" value="1"/>
</dbReference>
<dbReference type="Gene3D" id="3.30.230.10">
    <property type="match status" value="1"/>
</dbReference>
<dbReference type="Gene3D" id="3.30.70.240">
    <property type="match status" value="1"/>
</dbReference>
<dbReference type="Gene3D" id="3.30.70.870">
    <property type="entry name" value="Elongation Factor G (Translational Gtpase), domain 3"/>
    <property type="match status" value="1"/>
</dbReference>
<dbReference type="Gene3D" id="3.40.50.300">
    <property type="entry name" value="P-loop containing nucleotide triphosphate hydrolases"/>
    <property type="match status" value="1"/>
</dbReference>
<dbReference type="Gene3D" id="2.40.30.10">
    <property type="entry name" value="Translation factors"/>
    <property type="match status" value="1"/>
</dbReference>
<dbReference type="InterPro" id="IPR041095">
    <property type="entry name" value="EFG_II"/>
</dbReference>
<dbReference type="InterPro" id="IPR035647">
    <property type="entry name" value="EFG_III/V"/>
</dbReference>
<dbReference type="InterPro" id="IPR000640">
    <property type="entry name" value="EFG_V-like"/>
</dbReference>
<dbReference type="InterPro" id="IPR004161">
    <property type="entry name" value="EFTu-like_2"/>
</dbReference>
<dbReference type="InterPro" id="IPR031157">
    <property type="entry name" value="G_TR_CS"/>
</dbReference>
<dbReference type="InterPro" id="IPR027417">
    <property type="entry name" value="P-loop_NTPase"/>
</dbReference>
<dbReference type="InterPro" id="IPR020568">
    <property type="entry name" value="Ribosomal_Su5_D2-typ_SF"/>
</dbReference>
<dbReference type="InterPro" id="IPR014721">
    <property type="entry name" value="Ribsml_uS5_D2-typ_fold_subgr"/>
</dbReference>
<dbReference type="InterPro" id="IPR005225">
    <property type="entry name" value="Small_GTP-bd"/>
</dbReference>
<dbReference type="InterPro" id="IPR000795">
    <property type="entry name" value="T_Tr_GTP-bd_dom"/>
</dbReference>
<dbReference type="InterPro" id="IPR009000">
    <property type="entry name" value="Transl_B-barrel_sf"/>
</dbReference>
<dbReference type="InterPro" id="IPR005517">
    <property type="entry name" value="Transl_elong_EFG/EF2_IV"/>
</dbReference>
<dbReference type="NCBIfam" id="TIGR00231">
    <property type="entry name" value="small_GTP"/>
    <property type="match status" value="1"/>
</dbReference>
<dbReference type="PANTHER" id="PTHR42908:SF35">
    <property type="entry name" value="ELONGATION FACTOR 2"/>
    <property type="match status" value="1"/>
</dbReference>
<dbReference type="PANTHER" id="PTHR42908">
    <property type="entry name" value="TRANSLATION ELONGATION FACTOR-RELATED"/>
    <property type="match status" value="1"/>
</dbReference>
<dbReference type="Pfam" id="PF00679">
    <property type="entry name" value="EFG_C"/>
    <property type="match status" value="1"/>
</dbReference>
<dbReference type="Pfam" id="PF14492">
    <property type="entry name" value="EFG_III"/>
    <property type="match status" value="1"/>
</dbReference>
<dbReference type="Pfam" id="PF03764">
    <property type="entry name" value="EFG_IV"/>
    <property type="match status" value="1"/>
</dbReference>
<dbReference type="Pfam" id="PF00009">
    <property type="entry name" value="GTP_EFTU"/>
    <property type="match status" value="1"/>
</dbReference>
<dbReference type="Pfam" id="PF03144">
    <property type="entry name" value="GTP_EFTU_D2"/>
    <property type="match status" value="1"/>
</dbReference>
<dbReference type="PRINTS" id="PR00315">
    <property type="entry name" value="ELONGATNFCT"/>
</dbReference>
<dbReference type="SMART" id="SM00838">
    <property type="entry name" value="EFG_C"/>
    <property type="match status" value="1"/>
</dbReference>
<dbReference type="SMART" id="SM00889">
    <property type="entry name" value="EFG_IV"/>
    <property type="match status" value="1"/>
</dbReference>
<dbReference type="SUPFAM" id="SSF54980">
    <property type="entry name" value="EF-G C-terminal domain-like"/>
    <property type="match status" value="2"/>
</dbReference>
<dbReference type="SUPFAM" id="SSF52540">
    <property type="entry name" value="P-loop containing nucleoside triphosphate hydrolases"/>
    <property type="match status" value="1"/>
</dbReference>
<dbReference type="SUPFAM" id="SSF54211">
    <property type="entry name" value="Ribosomal protein S5 domain 2-like"/>
    <property type="match status" value="1"/>
</dbReference>
<dbReference type="SUPFAM" id="SSF50447">
    <property type="entry name" value="Translation proteins"/>
    <property type="match status" value="1"/>
</dbReference>
<dbReference type="PROSITE" id="PS00301">
    <property type="entry name" value="G_TR_1"/>
    <property type="match status" value="1"/>
</dbReference>
<dbReference type="PROSITE" id="PS51722">
    <property type="entry name" value="G_TR_2"/>
    <property type="match status" value="1"/>
</dbReference>
<proteinExistence type="evidence at transcript level"/>
<organism>
    <name type="scientific">Callithrix jacchus</name>
    <name type="common">White-tufted-ear marmoset</name>
    <dbReference type="NCBI Taxonomy" id="9483"/>
    <lineage>
        <taxon>Eukaryota</taxon>
        <taxon>Metazoa</taxon>
        <taxon>Chordata</taxon>
        <taxon>Craniata</taxon>
        <taxon>Vertebrata</taxon>
        <taxon>Euteleostomi</taxon>
        <taxon>Mammalia</taxon>
        <taxon>Eutheria</taxon>
        <taxon>Euarchontoglires</taxon>
        <taxon>Primates</taxon>
        <taxon>Haplorrhini</taxon>
        <taxon>Platyrrhini</taxon>
        <taxon>Cebidae</taxon>
        <taxon>Callitrichinae</taxon>
        <taxon>Callithrix</taxon>
        <taxon>Callithrix</taxon>
    </lineage>
</organism>
<keyword id="KW-0007">Acetylation</keyword>
<keyword id="KW-0963">Cytoplasm</keyword>
<keyword id="KW-0251">Elongation factor</keyword>
<keyword id="KW-0342">GTP-binding</keyword>
<keyword id="KW-0378">Hydrolase</keyword>
<keyword id="KW-1017">Isopeptide bond</keyword>
<keyword id="KW-0488">Methylation</keyword>
<keyword id="KW-0547">Nucleotide-binding</keyword>
<keyword id="KW-0539">Nucleus</keyword>
<keyword id="KW-0597">Phosphoprotein</keyword>
<keyword id="KW-0648">Protein biosynthesis</keyword>
<keyword id="KW-1185">Reference proteome</keyword>
<keyword id="KW-0832">Ubl conjugation</keyword>
<reference key="1">
    <citation type="submission" date="2006-11" db="EMBL/GenBank/DDBJ databases">
        <title>Free radical scavenging enzymes in Callithrix jacchus.</title>
        <authorList>
            <person name="Atanasova S.Y."/>
            <person name="von Ahsen N."/>
            <person name="Schlumbohm C."/>
            <person name="Wieland E."/>
            <person name="Oellerich M."/>
            <person name="Armstrong V."/>
        </authorList>
    </citation>
    <scope>NUCLEOTIDE SEQUENCE [MRNA]</scope>
    <source>
        <tissue>Liver</tissue>
    </source>
</reference>
<sequence length="858" mass="95311">MVNFTVDQIRAIMDKKANIRNMSVIAHVDHGKSTLTDSLVCKAGIIASARAGETRFTDTRKDEQERCITIKSTAISLFYELSENDLNFIKQSKDGAGFLINLIDSPGHVDFSSEVTAALRVTDGALVVVDCVSGVCVQTETVLRQAIAERIKPVLMMNKMDRALLELQLEPEELYQTFQRIVENVNVIISTYGEGESGPMGNIMIDPVLGTVGFGSGLHGWAFTLKQFAEMYVAKFAAKGEGQLGPAERAKKVEDMMKKLWGDRYFDPATGKFSKSASSPDGKKLPRTFCQLILDPIFKVFDAIMNFKKEETAKLIEKLDIKLDSEDKDKEGKPLLKAVMRRWLPAGDALLQMITIHLPSPVTAQKYRCELLYEGPPDDEAAMGIKSCDPKGPLMMYISKMVPTSDKGRFYAFGRVFSGLVSTGLKVRIMGPNYTPGKKEDLYLKPIQRTILMMGRYVEPIEDVPCGNIVGLVGVDQFLVKTGTITTFEHAHNMRVMKFSVSPVVRVAVEAKNPADLPKLVEGLKRLAKSDPMVQCIIEESGEHIIAGAGELHLEICLKDLEEDHACIPIKKSDPVVSYRETVSEESNVLCLSKSPNKHNRLYMKARPFPDGLAEDIDKGEVSARQELKQRARYLAEKYEWDVAEARKIWCFGPDGTGPNILTDITKGVQYLNEIKDSVVAGFQWATKEGALCEENMRGVRFDVHDVTLHADAIHRGGGQIIPTARRCLYASVLTAQPRLMEPIYLVEIQCPEQVVGGIYGVLNRKRGHVFEESQVAGTPMFVVKAYLPVNESFGFTADLRSNTGGQAFPQCVFDHWQILPGDPFDNTSRPSQVVAETRKRKGLKEGIPALDNFLDKL</sequence>
<name>EF2_CALJA</name>
<feature type="chain" id="PRO_0000273973" description="Elongation factor 2">
    <location>
        <begin position="1"/>
        <end position="858"/>
    </location>
</feature>
<feature type="domain" description="tr-type G" evidence="6">
    <location>
        <begin position="17"/>
        <end position="362"/>
    </location>
</feature>
<feature type="binding site" evidence="3">
    <location>
        <begin position="26"/>
        <end position="33"/>
    </location>
    <ligand>
        <name>GTP</name>
        <dbReference type="ChEBI" id="CHEBI:37565"/>
    </ligand>
</feature>
<feature type="binding site" evidence="3">
    <location>
        <begin position="158"/>
        <end position="161"/>
    </location>
    <ligand>
        <name>GTP</name>
        <dbReference type="ChEBI" id="CHEBI:37565"/>
    </ligand>
</feature>
<feature type="binding site" evidence="3">
    <location>
        <begin position="216"/>
        <end position="218"/>
    </location>
    <ligand>
        <name>GTP</name>
        <dbReference type="ChEBI" id="CHEBI:37565"/>
    </ligand>
</feature>
<feature type="site" description="Cleavage" evidence="2">
    <location>
        <begin position="586"/>
        <end position="587"/>
    </location>
</feature>
<feature type="site" description="Cleavage" evidence="2">
    <location>
        <begin position="605"/>
        <end position="606"/>
    </location>
</feature>
<feature type="modified residue" description="Phosphothreonine" evidence="2">
    <location>
        <position position="54"/>
    </location>
</feature>
<feature type="modified residue" description="Phosphothreonine; by EEF2K" evidence="2">
    <location>
        <position position="57"/>
    </location>
</feature>
<feature type="modified residue" description="Phosphothreonine" evidence="2">
    <location>
        <position position="59"/>
    </location>
</feature>
<feature type="modified residue" description="N6-succinyllysine" evidence="4">
    <location>
        <position position="152"/>
    </location>
</feature>
<feature type="modified residue" description="N6-acetyllysine" evidence="2">
    <location>
        <position position="235"/>
    </location>
</feature>
<feature type="modified residue" description="N6-acetyllysine; alternate" evidence="2">
    <location>
        <position position="239"/>
    </location>
</feature>
<feature type="modified residue" description="Phosphotyrosine; by CSK" evidence="2">
    <location>
        <position position="265"/>
    </location>
</feature>
<feature type="modified residue" description="N6-acetyllysine; alternate" evidence="2">
    <location>
        <position position="272"/>
    </location>
</feature>
<feature type="modified residue" description="N6-succinyllysine; alternate" evidence="4">
    <location>
        <position position="272"/>
    </location>
</feature>
<feature type="modified residue" description="N6-acetyllysine" evidence="2">
    <location>
        <position position="275"/>
    </location>
</feature>
<feature type="modified residue" description="Phosphoserine" evidence="1">
    <location>
        <position position="325"/>
    </location>
</feature>
<feature type="modified residue" description="Phosphotyrosine; by CSK" evidence="2">
    <location>
        <position position="373"/>
    </location>
</feature>
<feature type="modified residue" description="Phosphothreonine" evidence="2">
    <location>
        <position position="435"/>
    </location>
</feature>
<feature type="modified residue" description="N6-acetyllysine" evidence="4">
    <location>
        <position position="439"/>
    </location>
</feature>
<feature type="modified residue" description="N6-acetyllysine" evidence="2">
    <location>
        <position position="445"/>
    </location>
</feature>
<feature type="modified residue" description="Phosphoserine" evidence="2">
    <location>
        <position position="502"/>
    </location>
</feature>
<feature type="modified residue" description="N6,N6,N6-trimethyllysine; by EEF2KMT" evidence="2">
    <location>
        <position position="525"/>
    </location>
</feature>
<feature type="modified residue" description="N6-succinyllysine" evidence="4">
    <location>
        <position position="572"/>
    </location>
</feature>
<feature type="modified residue" description="Phosphoserine; by CDK2" evidence="2">
    <location>
        <position position="595"/>
    </location>
</feature>
<feature type="modified residue" description="N6-acetyllysine" evidence="4">
    <location>
        <position position="619"/>
    </location>
</feature>
<feature type="modified residue" description="Diphthamide" evidence="1">
    <location>
        <position position="715"/>
    </location>
</feature>
<feature type="cross-link" description="Glycyl lysine isopeptide (Lys-Gly) (interchain with G-Cter in SUMO1); alternate" evidence="2">
    <location>
        <position position="239"/>
    </location>
</feature>
<feature type="cross-link" description="Glycyl lysine isopeptide (Lys-Gly) (interchain with G-Cter in SUMO)" evidence="2">
    <location>
        <position position="322"/>
    </location>
</feature>
<feature type="cross-link" description="Glycyl lysine isopeptide (Lys-Gly) (interchain with G-Cter in SUMO)" evidence="2">
    <location>
        <position position="529"/>
    </location>
</feature>
<accession>A0SXL6</accession>